<geneLocation type="chloroplast"/>
<feature type="chain" id="PRO_0000130272" description="Small ribosomal subunit protein uS3c">
    <location>
        <begin position="1"/>
        <end position="218"/>
    </location>
</feature>
<feature type="domain" description="KH type-2">
    <location>
        <begin position="47"/>
        <end position="118"/>
    </location>
</feature>
<organism>
    <name type="scientific">Calycanthus floridus var. glaucus</name>
    <name type="common">Eastern sweetshrub</name>
    <name type="synonym">Calycanthus fertilis var. ferax</name>
    <dbReference type="NCBI Taxonomy" id="212734"/>
    <lineage>
        <taxon>Eukaryota</taxon>
        <taxon>Viridiplantae</taxon>
        <taxon>Streptophyta</taxon>
        <taxon>Embryophyta</taxon>
        <taxon>Tracheophyta</taxon>
        <taxon>Spermatophyta</taxon>
        <taxon>Magnoliopsida</taxon>
        <taxon>Magnoliidae</taxon>
        <taxon>Laurales</taxon>
        <taxon>Calycanthaceae</taxon>
        <taxon>Calycanthus</taxon>
    </lineage>
</organism>
<dbReference type="EMBL" id="AJ428413">
    <property type="protein sequence ID" value="CAD28759.1"/>
    <property type="molecule type" value="Genomic_DNA"/>
</dbReference>
<dbReference type="RefSeq" id="NP_862792.1">
    <property type="nucleotide sequence ID" value="NC_004993.1"/>
</dbReference>
<dbReference type="SMR" id="Q7YJU0"/>
<dbReference type="GeneID" id="2598044"/>
<dbReference type="GO" id="GO:0009507">
    <property type="term" value="C:chloroplast"/>
    <property type="evidence" value="ECO:0007669"/>
    <property type="project" value="UniProtKB-SubCell"/>
</dbReference>
<dbReference type="GO" id="GO:0022627">
    <property type="term" value="C:cytosolic small ribosomal subunit"/>
    <property type="evidence" value="ECO:0007669"/>
    <property type="project" value="TreeGrafter"/>
</dbReference>
<dbReference type="GO" id="GO:0019843">
    <property type="term" value="F:rRNA binding"/>
    <property type="evidence" value="ECO:0007669"/>
    <property type="project" value="UniProtKB-KW"/>
</dbReference>
<dbReference type="GO" id="GO:0003735">
    <property type="term" value="F:structural constituent of ribosome"/>
    <property type="evidence" value="ECO:0007669"/>
    <property type="project" value="InterPro"/>
</dbReference>
<dbReference type="GO" id="GO:0006412">
    <property type="term" value="P:translation"/>
    <property type="evidence" value="ECO:0007669"/>
    <property type="project" value="UniProtKB-UniRule"/>
</dbReference>
<dbReference type="CDD" id="cd02412">
    <property type="entry name" value="KH-II_30S_S3"/>
    <property type="match status" value="1"/>
</dbReference>
<dbReference type="FunFam" id="3.30.1140.32:FF:000003">
    <property type="entry name" value="30S ribosomal protein S3, chloroplastic"/>
    <property type="match status" value="1"/>
</dbReference>
<dbReference type="FunFam" id="3.30.300.20:FF:000008">
    <property type="entry name" value="30S ribosomal protein S3, chloroplastic"/>
    <property type="match status" value="1"/>
</dbReference>
<dbReference type="Gene3D" id="3.30.300.20">
    <property type="match status" value="1"/>
</dbReference>
<dbReference type="Gene3D" id="3.30.1140.32">
    <property type="entry name" value="Ribosomal protein S3, C-terminal domain"/>
    <property type="match status" value="1"/>
</dbReference>
<dbReference type="HAMAP" id="MF_01309_B">
    <property type="entry name" value="Ribosomal_uS3_B"/>
    <property type="match status" value="1"/>
</dbReference>
<dbReference type="InterPro" id="IPR015946">
    <property type="entry name" value="KH_dom-like_a/b"/>
</dbReference>
<dbReference type="InterPro" id="IPR009019">
    <property type="entry name" value="KH_sf_prok-type"/>
</dbReference>
<dbReference type="InterPro" id="IPR036419">
    <property type="entry name" value="Ribosomal_S3_C_sf"/>
</dbReference>
<dbReference type="InterPro" id="IPR005704">
    <property type="entry name" value="Ribosomal_uS3_bac-typ"/>
</dbReference>
<dbReference type="InterPro" id="IPR001351">
    <property type="entry name" value="Ribosomal_uS3_C"/>
</dbReference>
<dbReference type="InterPro" id="IPR018280">
    <property type="entry name" value="Ribosomal_uS3_CS"/>
</dbReference>
<dbReference type="NCBIfam" id="TIGR01009">
    <property type="entry name" value="rpsC_bact"/>
    <property type="match status" value="1"/>
</dbReference>
<dbReference type="PANTHER" id="PTHR11760">
    <property type="entry name" value="30S/40S RIBOSOMAL PROTEIN S3"/>
    <property type="match status" value="1"/>
</dbReference>
<dbReference type="PANTHER" id="PTHR11760:SF19">
    <property type="entry name" value="SMALL RIBOSOMAL SUBUNIT PROTEIN US3C"/>
    <property type="match status" value="1"/>
</dbReference>
<dbReference type="Pfam" id="PF00189">
    <property type="entry name" value="Ribosomal_S3_C"/>
    <property type="match status" value="1"/>
</dbReference>
<dbReference type="SUPFAM" id="SSF54814">
    <property type="entry name" value="Prokaryotic type KH domain (KH-domain type II)"/>
    <property type="match status" value="1"/>
</dbReference>
<dbReference type="SUPFAM" id="SSF54821">
    <property type="entry name" value="Ribosomal protein S3 C-terminal domain"/>
    <property type="match status" value="1"/>
</dbReference>
<dbReference type="PROSITE" id="PS00548">
    <property type="entry name" value="RIBOSOMAL_S3"/>
    <property type="match status" value="1"/>
</dbReference>
<name>RR3_CALFG</name>
<keyword id="KW-0150">Chloroplast</keyword>
<keyword id="KW-0934">Plastid</keyword>
<keyword id="KW-0687">Ribonucleoprotein</keyword>
<keyword id="KW-0689">Ribosomal protein</keyword>
<keyword id="KW-0694">RNA-binding</keyword>
<keyword id="KW-0699">rRNA-binding</keyword>
<sequence>MGQKINPLGFRLGENQSHHSLWFAQPKSYCRGLQEDEKIRDCIKIYVQKNMRISSGFEGIAHIEIQKKMDLIQVIISIGFPNFLIEGGTRGIEELQMNVQKRFHSANRRLNIAITRVAKPYGQPNILAEYIARQLKNRVSFRKAMKKVIELTEQADTKGIQVQIAGRIDGKEIARVEWIREGRVPLQTIRAKIDHCSYTVRTIYGVLGIKIWIFVDEQ</sequence>
<accession>Q7YJU0</accession>
<protein>
    <recommendedName>
        <fullName evidence="2">Small ribosomal subunit protein uS3c</fullName>
    </recommendedName>
    <alternativeName>
        <fullName>30S ribosomal protein S3, chloroplastic</fullName>
    </alternativeName>
</protein>
<evidence type="ECO:0000250" key="1"/>
<evidence type="ECO:0000305" key="2"/>
<reference key="1">
    <citation type="journal article" date="2003" name="Plant Syst. Evol.">
        <title>The chloroplast genome of the 'basal' angiosperm Calycanthus fertilis -- structural and phylogenetic analyses.</title>
        <authorList>
            <person name="Goremykin V."/>
            <person name="Hirsch-Ernst K.I."/>
            <person name="Woelfl S."/>
            <person name="Hellwig F.H."/>
        </authorList>
    </citation>
    <scope>NUCLEOTIDE SEQUENCE [LARGE SCALE GENOMIC DNA]</scope>
</reference>
<comment type="subunit">
    <text evidence="1">Part of the 30S ribosomal subunit.</text>
</comment>
<comment type="subcellular location">
    <subcellularLocation>
        <location>Plastid</location>
        <location>Chloroplast</location>
    </subcellularLocation>
</comment>
<comment type="similarity">
    <text evidence="2">Belongs to the universal ribosomal protein uS3 family.</text>
</comment>
<gene>
    <name type="primary">rps3</name>
</gene>
<proteinExistence type="inferred from homology"/>